<keyword id="KW-0325">Glycoprotein</keyword>
<keyword id="KW-0333">Golgi apparatus</keyword>
<keyword id="KW-0472">Membrane</keyword>
<keyword id="KW-1185">Reference proteome</keyword>
<keyword id="KW-0812">Transmembrane</keyword>
<keyword id="KW-1133">Transmembrane helix</keyword>
<gene>
    <name type="primary">TVP18</name>
    <name type="ORF">PGUG_01758</name>
</gene>
<reference key="1">
    <citation type="journal article" date="2009" name="Nature">
        <title>Evolution of pathogenicity and sexual reproduction in eight Candida genomes.</title>
        <authorList>
            <person name="Butler G."/>
            <person name="Rasmussen M.D."/>
            <person name="Lin M.F."/>
            <person name="Santos M.A.S."/>
            <person name="Sakthikumar S."/>
            <person name="Munro C.A."/>
            <person name="Rheinbay E."/>
            <person name="Grabherr M."/>
            <person name="Forche A."/>
            <person name="Reedy J.L."/>
            <person name="Agrafioti I."/>
            <person name="Arnaud M.B."/>
            <person name="Bates S."/>
            <person name="Brown A.J.P."/>
            <person name="Brunke S."/>
            <person name="Costanzo M.C."/>
            <person name="Fitzpatrick D.A."/>
            <person name="de Groot P.W.J."/>
            <person name="Harris D."/>
            <person name="Hoyer L.L."/>
            <person name="Hube B."/>
            <person name="Klis F.M."/>
            <person name="Kodira C."/>
            <person name="Lennard N."/>
            <person name="Logue M.E."/>
            <person name="Martin R."/>
            <person name="Neiman A.M."/>
            <person name="Nikolaou E."/>
            <person name="Quail M.A."/>
            <person name="Quinn J."/>
            <person name="Santos M.C."/>
            <person name="Schmitzberger F.F."/>
            <person name="Sherlock G."/>
            <person name="Shah P."/>
            <person name="Silverstein K.A.T."/>
            <person name="Skrzypek M.S."/>
            <person name="Soll D."/>
            <person name="Staggs R."/>
            <person name="Stansfield I."/>
            <person name="Stumpf M.P.H."/>
            <person name="Sudbery P.E."/>
            <person name="Srikantha T."/>
            <person name="Zeng Q."/>
            <person name="Berman J."/>
            <person name="Berriman M."/>
            <person name="Heitman J."/>
            <person name="Gow N.A.R."/>
            <person name="Lorenz M.C."/>
            <person name="Birren B.W."/>
            <person name="Kellis M."/>
            <person name="Cuomo C.A."/>
        </authorList>
    </citation>
    <scope>NUCLEOTIDE SEQUENCE [LARGE SCALE GENOMIC DNA]</scope>
    <source>
        <strain>ATCC 6260 / CBS 566 / DSM 6381 / JCM 1539 / NBRC 10279 / NRRL Y-324</strain>
    </source>
</reference>
<accession>A5DEQ7</accession>
<evidence type="ECO:0000250" key="1"/>
<evidence type="ECO:0000255" key="2"/>
<evidence type="ECO:0000305" key="3"/>
<protein>
    <recommendedName>
        <fullName>Golgi apparatus membrane protein TVP18</fullName>
    </recommendedName>
</protein>
<feature type="chain" id="PRO_0000343026" description="Golgi apparatus membrane protein TVP18">
    <location>
        <begin position="1"/>
        <end position="172"/>
    </location>
</feature>
<feature type="transmembrane region" description="Helical" evidence="2">
    <location>
        <begin position="29"/>
        <end position="49"/>
    </location>
</feature>
<feature type="transmembrane region" description="Helical" evidence="2">
    <location>
        <begin position="51"/>
        <end position="71"/>
    </location>
</feature>
<feature type="transmembrane region" description="Helical" evidence="2">
    <location>
        <begin position="97"/>
        <end position="114"/>
    </location>
</feature>
<feature type="transmembrane region" description="Helical" evidence="2">
    <location>
        <begin position="120"/>
        <end position="140"/>
    </location>
</feature>
<feature type="glycosylation site" description="N-linked (GlcNAc...) asparagine" evidence="2">
    <location>
        <position position="24"/>
    </location>
</feature>
<proteinExistence type="inferred from homology"/>
<comment type="function">
    <text evidence="1">Golgi membrane protein involved in vesicular trafficking.</text>
</comment>
<comment type="subcellular location">
    <subcellularLocation>
        <location evidence="1">Golgi apparatus membrane</location>
        <topology evidence="1">Multi-pass membrane protein</topology>
    </subcellularLocation>
</comment>
<comment type="similarity">
    <text evidence="3">Belongs to the TVP18 family.</text>
</comment>
<name>TVP18_PICGU</name>
<sequence length="172" mass="19056">MALSISTVMSNVFGGFSADFKKKNFSLYGQWIGLFTIILCLALGIANIFHASLVIIFSIICIVQGLVVVFVEVPFLLRICPLTDKFTSFIKNFDENWPRCGFYLLMSVIQWLSLTLQTTSLIVVAVFFALASACYALAAIKHQEYLKTSFNVAGEQGSLEAQVGEHVVRNVL</sequence>
<organism>
    <name type="scientific">Meyerozyma guilliermondii (strain ATCC 6260 / CBS 566 / DSM 6381 / JCM 1539 / NBRC 10279 / NRRL Y-324)</name>
    <name type="common">Yeast</name>
    <name type="synonym">Candida guilliermondii</name>
    <dbReference type="NCBI Taxonomy" id="294746"/>
    <lineage>
        <taxon>Eukaryota</taxon>
        <taxon>Fungi</taxon>
        <taxon>Dikarya</taxon>
        <taxon>Ascomycota</taxon>
        <taxon>Saccharomycotina</taxon>
        <taxon>Pichiomycetes</taxon>
        <taxon>Debaryomycetaceae</taxon>
        <taxon>Meyerozyma</taxon>
    </lineage>
</organism>
<dbReference type="EMBL" id="CH408156">
    <property type="protein sequence ID" value="EDK37660.2"/>
    <property type="molecule type" value="Genomic_DNA"/>
</dbReference>
<dbReference type="RefSeq" id="XP_001486087.1">
    <property type="nucleotide sequence ID" value="XM_001486037.1"/>
</dbReference>
<dbReference type="FunCoup" id="A5DEQ7">
    <property type="interactions" value="54"/>
</dbReference>
<dbReference type="STRING" id="294746.A5DEQ7"/>
<dbReference type="GlyCosmos" id="A5DEQ7">
    <property type="glycosylation" value="1 site, No reported glycans"/>
</dbReference>
<dbReference type="GeneID" id="5127888"/>
<dbReference type="KEGG" id="pgu:PGUG_01758"/>
<dbReference type="VEuPathDB" id="FungiDB:PGUG_01758"/>
<dbReference type="eggNOG" id="ENOG502S3AC">
    <property type="taxonomic scope" value="Eukaryota"/>
</dbReference>
<dbReference type="HOGENOM" id="CLU_118698_0_0_1"/>
<dbReference type="InParanoid" id="A5DEQ7"/>
<dbReference type="OMA" id="IYAQWLG"/>
<dbReference type="OrthoDB" id="5591789at2759"/>
<dbReference type="Proteomes" id="UP000001997">
    <property type="component" value="Unassembled WGS sequence"/>
</dbReference>
<dbReference type="GO" id="GO:0000139">
    <property type="term" value="C:Golgi membrane"/>
    <property type="evidence" value="ECO:0007669"/>
    <property type="project" value="UniProtKB-SubCell"/>
</dbReference>
<dbReference type="GO" id="GO:0016192">
    <property type="term" value="P:vesicle-mediated transport"/>
    <property type="evidence" value="ECO:0007669"/>
    <property type="project" value="TreeGrafter"/>
</dbReference>
<dbReference type="InterPro" id="IPR019365">
    <property type="entry name" value="TVP18/Ca-channel_flower"/>
</dbReference>
<dbReference type="PANTHER" id="PTHR13314">
    <property type="entry name" value="CALCIUM CHANNEL FLOWER HOMOLOG"/>
    <property type="match status" value="1"/>
</dbReference>
<dbReference type="PANTHER" id="PTHR13314:SF2">
    <property type="entry name" value="CALCIUM CHANNEL FLOWER HOMOLOG"/>
    <property type="match status" value="1"/>
</dbReference>
<dbReference type="Pfam" id="PF10233">
    <property type="entry name" value="Cg6151-P"/>
    <property type="match status" value="1"/>
</dbReference>
<dbReference type="SMART" id="SM01077">
    <property type="entry name" value="Cg6151-P"/>
    <property type="match status" value="1"/>
</dbReference>